<comment type="function">
    <text evidence="1">Neutrophil and pancreatic elastase-specific inhibitor of skin. It may prevent elastase-mediated tissue proteolysis (By similarity).</text>
</comment>
<comment type="tissue specificity">
    <text>Trachea and large intestine.</text>
</comment>
<proteinExistence type="evidence at transcript level"/>
<name>ELAF_PIG</name>
<accession>Q29125</accession>
<protein>
    <recommendedName>
        <fullName>Elafin</fullName>
    </recommendedName>
    <alternativeName>
        <fullName>Protein WAP-1</fullName>
    </alternativeName>
</protein>
<dbReference type="EMBL" id="D50319">
    <property type="protein sequence ID" value="BAA08854.1"/>
    <property type="molecule type" value="Genomic_DNA"/>
</dbReference>
<dbReference type="RefSeq" id="NP_001116687.1">
    <property type="nucleotide sequence ID" value="NM_001123215.1"/>
</dbReference>
<dbReference type="SMR" id="Q29125"/>
<dbReference type="STRING" id="9823.ENSSSCP00000054873"/>
<dbReference type="MEROPS" id="I17.002"/>
<dbReference type="Ensembl" id="ENSSSCT00070024379.1">
    <property type="protein sequence ID" value="ENSSSCP00070020177.1"/>
    <property type="gene ID" value="ENSSSCG00070012460.1"/>
</dbReference>
<dbReference type="Ensembl" id="ENSSSCT00070024381.1">
    <property type="protein sequence ID" value="ENSSSCP00070020179.1"/>
    <property type="gene ID" value="ENSSSCG00070012460.1"/>
</dbReference>
<dbReference type="Ensembl" id="ENSSSCT00090007603">
    <property type="protein sequence ID" value="ENSSSCP00090004562"/>
    <property type="gene ID" value="ENSSSCG00090004338"/>
</dbReference>
<dbReference type="GeneID" id="396757"/>
<dbReference type="CTD" id="5266"/>
<dbReference type="eggNOG" id="ENOG502SZ79">
    <property type="taxonomic scope" value="Eukaryota"/>
</dbReference>
<dbReference type="InParanoid" id="Q29125"/>
<dbReference type="OrthoDB" id="5104187at2759"/>
<dbReference type="Reactome" id="R-SSC-6803157">
    <property type="pathway name" value="Antimicrobial peptides"/>
</dbReference>
<dbReference type="Reactome" id="R-SSC-6809371">
    <property type="pathway name" value="Formation of the cornified envelope"/>
</dbReference>
<dbReference type="Proteomes" id="UP000008227">
    <property type="component" value="Unplaced"/>
</dbReference>
<dbReference type="Proteomes" id="UP000314985">
    <property type="component" value="Chromosome 17"/>
</dbReference>
<dbReference type="Proteomes" id="UP000694570">
    <property type="component" value="Unplaced"/>
</dbReference>
<dbReference type="Proteomes" id="UP000694571">
    <property type="component" value="Unplaced"/>
</dbReference>
<dbReference type="Proteomes" id="UP000694720">
    <property type="component" value="Unplaced"/>
</dbReference>
<dbReference type="Proteomes" id="UP000694722">
    <property type="component" value="Unplaced"/>
</dbReference>
<dbReference type="Proteomes" id="UP000694723">
    <property type="component" value="Unplaced"/>
</dbReference>
<dbReference type="Proteomes" id="UP000694724">
    <property type="component" value="Unplaced"/>
</dbReference>
<dbReference type="Proteomes" id="UP000694725">
    <property type="component" value="Unplaced"/>
</dbReference>
<dbReference type="Proteomes" id="UP000694726">
    <property type="component" value="Unplaced"/>
</dbReference>
<dbReference type="Proteomes" id="UP000694727">
    <property type="component" value="Unplaced"/>
</dbReference>
<dbReference type="Proteomes" id="UP000694728">
    <property type="component" value="Unplaced"/>
</dbReference>
<dbReference type="GO" id="GO:0005615">
    <property type="term" value="C:extracellular space"/>
    <property type="evidence" value="ECO:0000318"/>
    <property type="project" value="GO_Central"/>
</dbReference>
<dbReference type="GO" id="GO:0004867">
    <property type="term" value="F:serine-type endopeptidase inhibitor activity"/>
    <property type="evidence" value="ECO:0000318"/>
    <property type="project" value="GO_Central"/>
</dbReference>
<dbReference type="GO" id="GO:0019731">
    <property type="term" value="P:antibacterial humoral response"/>
    <property type="evidence" value="ECO:0000318"/>
    <property type="project" value="GO_Central"/>
</dbReference>
<dbReference type="GO" id="GO:0045087">
    <property type="term" value="P:innate immune response"/>
    <property type="evidence" value="ECO:0000318"/>
    <property type="project" value="GO_Central"/>
</dbReference>
<dbReference type="CDD" id="cd00199">
    <property type="entry name" value="WAP"/>
    <property type="match status" value="1"/>
</dbReference>
<dbReference type="FunFam" id="4.10.75.10:FF:000001">
    <property type="entry name" value="Anosmin 1"/>
    <property type="match status" value="1"/>
</dbReference>
<dbReference type="Gene3D" id="4.10.75.10">
    <property type="entry name" value="Elafin-like"/>
    <property type="match status" value="1"/>
</dbReference>
<dbReference type="InterPro" id="IPR036645">
    <property type="entry name" value="Elafin-like_sf"/>
</dbReference>
<dbReference type="InterPro" id="IPR019541">
    <property type="entry name" value="Trappin_transglut-bd_rpt"/>
</dbReference>
<dbReference type="InterPro" id="IPR008197">
    <property type="entry name" value="WAP_dom"/>
</dbReference>
<dbReference type="InterPro" id="IPR050514">
    <property type="entry name" value="WAP_four-disulfide_core"/>
</dbReference>
<dbReference type="PANTHER" id="PTHR19441:SF30">
    <property type="entry name" value="ELAFIN"/>
    <property type="match status" value="1"/>
</dbReference>
<dbReference type="PANTHER" id="PTHR19441">
    <property type="entry name" value="WHEY ACDIC PROTEIN WAP"/>
    <property type="match status" value="1"/>
</dbReference>
<dbReference type="Pfam" id="PF10511">
    <property type="entry name" value="Cementoin"/>
    <property type="match status" value="2"/>
</dbReference>
<dbReference type="Pfam" id="PF00095">
    <property type="entry name" value="WAP"/>
    <property type="match status" value="1"/>
</dbReference>
<dbReference type="PRINTS" id="PR00003">
    <property type="entry name" value="4DISULPHCORE"/>
</dbReference>
<dbReference type="SMART" id="SM00217">
    <property type="entry name" value="WAP"/>
    <property type="match status" value="1"/>
</dbReference>
<dbReference type="SUPFAM" id="SSF57256">
    <property type="entry name" value="Elafin-like"/>
    <property type="match status" value="1"/>
</dbReference>
<dbReference type="PROSITE" id="PS51390">
    <property type="entry name" value="WAP"/>
    <property type="match status" value="1"/>
</dbReference>
<reference key="1">
    <citation type="journal article" date="1996" name="J. Biol. Chem.">
        <title>Accelerated evolution in inhibitor domains of porcine elafin family members.</title>
        <authorList>
            <person name="Tamechika I."/>
            <person name="Itakura M."/>
            <person name="Saruta Y."/>
            <person name="Furukawa M."/>
            <person name="Kato A."/>
            <person name="Tachibana S."/>
            <person name="Hirose S."/>
        </authorList>
    </citation>
    <scope>NUCLEOTIDE SEQUENCE [GENOMIC DNA]</scope>
</reference>
<evidence type="ECO:0000250" key="1"/>
<evidence type="ECO:0000255" key="2"/>
<evidence type="ECO:0000255" key="3">
    <source>
        <dbReference type="PROSITE-ProRule" id="PRU00722"/>
    </source>
</evidence>
<evidence type="ECO:0000256" key="4">
    <source>
        <dbReference type="SAM" id="MobiDB-lite"/>
    </source>
</evidence>
<feature type="signal peptide" evidence="2">
    <location>
        <begin position="1"/>
        <end position="21"/>
    </location>
</feature>
<feature type="propeptide" id="PRO_0000041359" evidence="2">
    <location>
        <begin position="22"/>
        <end position="70"/>
    </location>
</feature>
<feature type="chain" id="PRO_0000041360" description="Elafin">
    <location>
        <begin position="71"/>
        <end position="167"/>
    </location>
</feature>
<feature type="repeat" description="1">
    <location>
        <begin position="44"/>
        <end position="49"/>
    </location>
</feature>
<feature type="repeat" description="2">
    <location>
        <begin position="50"/>
        <end position="55"/>
    </location>
</feature>
<feature type="repeat" description="3">
    <location>
        <begin position="56"/>
        <end position="61"/>
    </location>
</feature>
<feature type="repeat" description="4">
    <location>
        <begin position="62"/>
        <end position="67"/>
    </location>
</feature>
<feature type="repeat" description="5">
    <location>
        <begin position="68"/>
        <end position="73"/>
    </location>
</feature>
<feature type="repeat" description="6">
    <location>
        <begin position="74"/>
        <end position="79"/>
    </location>
</feature>
<feature type="repeat" description="SVP-1 clotting 1">
    <location>
        <begin position="80"/>
        <end position="101"/>
    </location>
</feature>
<feature type="repeat" description="7">
    <location>
        <begin position="80"/>
        <end position="85"/>
    </location>
</feature>
<feature type="repeat" description="8">
    <location>
        <begin position="86"/>
        <end position="91"/>
    </location>
</feature>
<feature type="repeat" description="9">
    <location>
        <begin position="92"/>
        <end position="97"/>
    </location>
</feature>
<feature type="repeat" description="10">
    <location>
        <begin position="98"/>
        <end position="103"/>
    </location>
</feature>
<feature type="repeat" description="SVP-1 clotting 2">
    <location>
        <begin position="104"/>
        <end position="126"/>
    </location>
</feature>
<feature type="repeat" description="11">
    <location>
        <begin position="104"/>
        <end position="109"/>
    </location>
</feature>
<feature type="repeat" description="12">
    <location>
        <begin position="110"/>
        <end position="115"/>
    </location>
</feature>
<feature type="domain" description="WAP" evidence="3">
    <location>
        <begin position="119"/>
        <end position="167"/>
    </location>
</feature>
<feature type="region of interest" description="12 X 6 AA tandem repeats of [GSAL]-[QEK]-[DGLP]-[APSLQ]-[VGDFI]-[KR]">
    <location>
        <begin position="44"/>
        <end position="115"/>
    </location>
</feature>
<feature type="region of interest" description="Disordered" evidence="4">
    <location>
        <begin position="46"/>
        <end position="104"/>
    </location>
</feature>
<feature type="region of interest" description="2 X tandem repeats of SVP-1 like motif">
    <location>
        <begin position="78"/>
        <end position="126"/>
    </location>
</feature>
<feature type="compositionally biased region" description="Basic and acidic residues" evidence="4">
    <location>
        <begin position="79"/>
        <end position="91"/>
    </location>
</feature>
<feature type="disulfide bond" evidence="3">
    <location>
        <begin position="126"/>
        <end position="155"/>
    </location>
</feature>
<feature type="disulfide bond" evidence="3">
    <location>
        <begin position="133"/>
        <end position="159"/>
    </location>
</feature>
<feature type="disulfide bond" evidence="3">
    <location>
        <begin position="142"/>
        <end position="154"/>
    </location>
</feature>
<feature type="disulfide bond" evidence="3">
    <location>
        <begin position="148"/>
        <end position="163"/>
    </location>
</feature>
<organism>
    <name type="scientific">Sus scrofa</name>
    <name type="common">Pig</name>
    <dbReference type="NCBI Taxonomy" id="9823"/>
    <lineage>
        <taxon>Eukaryota</taxon>
        <taxon>Metazoa</taxon>
        <taxon>Chordata</taxon>
        <taxon>Craniata</taxon>
        <taxon>Vertebrata</taxon>
        <taxon>Euteleostomi</taxon>
        <taxon>Mammalia</taxon>
        <taxon>Eutheria</taxon>
        <taxon>Laurasiatheria</taxon>
        <taxon>Artiodactyla</taxon>
        <taxon>Suina</taxon>
        <taxon>Suidae</taxon>
        <taxon>Sus</taxon>
    </lineage>
</organism>
<keyword id="KW-1015">Disulfide bond</keyword>
<keyword id="KW-0646">Protease inhibitor</keyword>
<keyword id="KW-1185">Reference proteome</keyword>
<keyword id="KW-0677">Repeat</keyword>
<keyword id="KW-0722">Serine protease inhibitor</keyword>
<keyword id="KW-0732">Signal</keyword>
<sequence length="167" mass="17923">MRSRSFLVLVVVFLICGTLVAQAAGRIRRPKGKGTKKILALVKGQGPVRGKDQVKGQGPVKGQDLGKSQDPVKAQLPDKGQDLGKGEDSVKGQDPFKAQLPDKLQDPVKAQPAIKRLILLTKPGSCPRILIRCLMVNPPNRCLSDAQCPGLKKCCEGFCGKACMDPK</sequence>